<feature type="chain" id="PRO_0000287620" description="Protein FAM133">
    <location>
        <begin position="1"/>
        <end position="250"/>
    </location>
</feature>
<feature type="region of interest" description="Disordered" evidence="1">
    <location>
        <begin position="18"/>
        <end position="250"/>
    </location>
</feature>
<feature type="compositionally biased region" description="Basic and acidic residues" evidence="1">
    <location>
        <begin position="39"/>
        <end position="49"/>
    </location>
</feature>
<feature type="compositionally biased region" description="Basic and acidic residues" evidence="1">
    <location>
        <begin position="59"/>
        <end position="80"/>
    </location>
</feature>
<feature type="compositionally biased region" description="Basic residues" evidence="1">
    <location>
        <begin position="90"/>
        <end position="102"/>
    </location>
</feature>
<feature type="compositionally biased region" description="Low complexity" evidence="1">
    <location>
        <begin position="103"/>
        <end position="121"/>
    </location>
</feature>
<feature type="compositionally biased region" description="Basic residues" evidence="1">
    <location>
        <begin position="130"/>
        <end position="143"/>
    </location>
</feature>
<feature type="compositionally biased region" description="Basic and acidic residues" evidence="1">
    <location>
        <begin position="155"/>
        <end position="176"/>
    </location>
</feature>
<feature type="compositionally biased region" description="Basic residues" evidence="1">
    <location>
        <begin position="177"/>
        <end position="186"/>
    </location>
</feature>
<feature type="compositionally biased region" description="Basic and acidic residues" evidence="1">
    <location>
        <begin position="214"/>
        <end position="224"/>
    </location>
</feature>
<feature type="compositionally biased region" description="Basic residues" evidence="1">
    <location>
        <begin position="225"/>
        <end position="242"/>
    </location>
</feature>
<protein>
    <recommendedName>
        <fullName>Protein FAM133</fullName>
    </recommendedName>
</protein>
<keyword id="KW-1185">Reference proteome</keyword>
<name>F133_CHICK</name>
<dbReference type="EMBL" id="AJ719706">
    <property type="protein sequence ID" value="CAG31365.1"/>
    <property type="molecule type" value="mRNA"/>
</dbReference>
<dbReference type="RefSeq" id="NP_001026146.1">
    <property type="nucleotide sequence ID" value="NM_001030975.1"/>
</dbReference>
<dbReference type="SMR" id="Q5ZLM8"/>
<dbReference type="STRING" id="9031.ENSGALP00000055524"/>
<dbReference type="PaxDb" id="9031-ENSGALP00000015411"/>
<dbReference type="GeneID" id="420557"/>
<dbReference type="KEGG" id="gga:420557"/>
<dbReference type="CTD" id="257415"/>
<dbReference type="VEuPathDB" id="HostDB:geneid_420557"/>
<dbReference type="eggNOG" id="ENOG502QWN4">
    <property type="taxonomic scope" value="Eukaryota"/>
</dbReference>
<dbReference type="InParanoid" id="Q5ZLM8"/>
<dbReference type="OrthoDB" id="10065679at2759"/>
<dbReference type="PRO" id="PR:Q5ZLM8"/>
<dbReference type="Proteomes" id="UP000000539">
    <property type="component" value="Unassembled WGS sequence"/>
</dbReference>
<dbReference type="InterPro" id="IPR026766">
    <property type="entry name" value="Fam133"/>
</dbReference>
<dbReference type="PANTHER" id="PTHR31911:SF1">
    <property type="entry name" value="FAMILY WITH SEQUENCE SIMILARITY 133 MEMBER B-RELATED"/>
    <property type="match status" value="1"/>
</dbReference>
<dbReference type="PANTHER" id="PTHR31911">
    <property type="entry name" value="PROTEIN FAM133"/>
    <property type="match status" value="1"/>
</dbReference>
<proteinExistence type="evidence at transcript level"/>
<sequence>MGKRDNRVAYMNPIAMARARGPAQNSGPTIQDYLNRPRPTWEEVKEQLEKKKKGSRALAEFEEKMNENWKKELEKHREKLLGGNESSSKKKEKKKKEKKKSSRLSSSSSSSSSSDSSSSASDSEDEDKKQGKKKKKKKHRSSRKSSSSSASESESDSKDSTKKKKSKEEHEKEKDGKNHHRKRKKADRGDGPLSSESLSGPDQTEEVQVKKKKSNEEKEKATDKAKKRKKHKKHSKKKKKKAAGSNSDLE</sequence>
<reference key="1">
    <citation type="journal article" date="2005" name="Genome Biol.">
        <title>Full-length cDNAs from chicken bursal lymphocytes to facilitate gene function analysis.</title>
        <authorList>
            <person name="Caldwell R.B."/>
            <person name="Kierzek A.M."/>
            <person name="Arakawa H."/>
            <person name="Bezzubov Y."/>
            <person name="Zaim J."/>
            <person name="Fiedler P."/>
            <person name="Kutter S."/>
            <person name="Blagodatski A."/>
            <person name="Kostovska D."/>
            <person name="Koter M."/>
            <person name="Plachy J."/>
            <person name="Carninci P."/>
            <person name="Hayashizaki Y."/>
            <person name="Buerstedde J.-M."/>
        </authorList>
    </citation>
    <scope>NUCLEOTIDE SEQUENCE [LARGE SCALE MRNA]</scope>
    <source>
        <strain>CB</strain>
        <tissue>Bursa of Fabricius</tissue>
    </source>
</reference>
<evidence type="ECO:0000256" key="1">
    <source>
        <dbReference type="SAM" id="MobiDB-lite"/>
    </source>
</evidence>
<evidence type="ECO:0000305" key="2"/>
<comment type="similarity">
    <text evidence="2">Belongs to the FAM133 family.</text>
</comment>
<accession>Q5ZLM8</accession>
<gene>
    <name type="primary">FAM133</name>
    <name type="ORF">RCJMB04_5h14</name>
</gene>
<organism>
    <name type="scientific">Gallus gallus</name>
    <name type="common">Chicken</name>
    <dbReference type="NCBI Taxonomy" id="9031"/>
    <lineage>
        <taxon>Eukaryota</taxon>
        <taxon>Metazoa</taxon>
        <taxon>Chordata</taxon>
        <taxon>Craniata</taxon>
        <taxon>Vertebrata</taxon>
        <taxon>Euteleostomi</taxon>
        <taxon>Archelosauria</taxon>
        <taxon>Archosauria</taxon>
        <taxon>Dinosauria</taxon>
        <taxon>Saurischia</taxon>
        <taxon>Theropoda</taxon>
        <taxon>Coelurosauria</taxon>
        <taxon>Aves</taxon>
        <taxon>Neognathae</taxon>
        <taxon>Galloanserae</taxon>
        <taxon>Galliformes</taxon>
        <taxon>Phasianidae</taxon>
        <taxon>Phasianinae</taxon>
        <taxon>Gallus</taxon>
    </lineage>
</organism>